<evidence type="ECO:0000255" key="1">
    <source>
        <dbReference type="PROSITE-ProRule" id="PRU00981"/>
    </source>
</evidence>
<evidence type="ECO:0000256" key="2">
    <source>
        <dbReference type="SAM" id="MobiDB-lite"/>
    </source>
</evidence>
<evidence type="ECO:0000269" key="3">
    <source>
    </source>
</evidence>
<evidence type="ECO:0000269" key="4">
    <source>
    </source>
</evidence>
<evidence type="ECO:0000269" key="5">
    <source>
    </source>
</evidence>
<evidence type="ECO:0000269" key="6">
    <source>
    </source>
</evidence>
<evidence type="ECO:0000303" key="7">
    <source>
    </source>
</evidence>
<evidence type="ECO:0000305" key="8"/>
<evidence type="ECO:0000305" key="9">
    <source>
    </source>
</evidence>
<evidence type="ECO:0000312" key="10">
    <source>
        <dbReference type="WormBase" id="C17C3.8"/>
    </source>
</evidence>
<dbReference type="EMBL" id="BX284602">
    <property type="protein sequence ID" value="CCD64839.1"/>
    <property type="molecule type" value="Genomic_DNA"/>
</dbReference>
<dbReference type="PIR" id="T15528">
    <property type="entry name" value="T15528"/>
</dbReference>
<dbReference type="RefSeq" id="NP_495062.1">
    <property type="nucleotide sequence ID" value="NM_062661.7"/>
</dbReference>
<dbReference type="SMR" id="Q18053"/>
<dbReference type="BioGRID" id="39281">
    <property type="interactions" value="33"/>
</dbReference>
<dbReference type="FunCoup" id="Q18053">
    <property type="interactions" value="398"/>
</dbReference>
<dbReference type="IntAct" id="Q18053">
    <property type="interactions" value="32"/>
</dbReference>
<dbReference type="STRING" id="6239.C17C3.8.1"/>
<dbReference type="PaxDb" id="6239-C17C3.8"/>
<dbReference type="EnsemblMetazoa" id="C17C3.8.1">
    <property type="protein sequence ID" value="C17C3.8.1"/>
    <property type="gene ID" value="WBGene00001965"/>
</dbReference>
<dbReference type="GeneID" id="173939"/>
<dbReference type="KEGG" id="cel:CELE_C17C3.8"/>
<dbReference type="UCSC" id="C17C3.8">
    <property type="organism name" value="c. elegans"/>
</dbReference>
<dbReference type="AGR" id="WB:WBGene00001965"/>
<dbReference type="CTD" id="173939"/>
<dbReference type="WormBase" id="C17C3.8">
    <property type="protein sequence ID" value="CE04028"/>
    <property type="gene ID" value="WBGene00001965"/>
    <property type="gene designation" value="hlh-26"/>
</dbReference>
<dbReference type="eggNOG" id="ENOG502TFEF">
    <property type="taxonomic scope" value="Eukaryota"/>
</dbReference>
<dbReference type="GeneTree" id="ENSGT00970000196840"/>
<dbReference type="HOGENOM" id="CLU_1311103_0_0_1"/>
<dbReference type="InParanoid" id="Q18053"/>
<dbReference type="OMA" id="RRDDTND"/>
<dbReference type="OrthoDB" id="5909477at2759"/>
<dbReference type="PhylomeDB" id="Q18053"/>
<dbReference type="SignaLink" id="Q18053"/>
<dbReference type="PRO" id="PR:Q18053"/>
<dbReference type="Proteomes" id="UP000001940">
    <property type="component" value="Chromosome II"/>
</dbReference>
<dbReference type="Bgee" id="WBGene00001965">
    <property type="expression patterns" value="Expressed in embryo and 1 other cell type or tissue"/>
</dbReference>
<dbReference type="GO" id="GO:0005634">
    <property type="term" value="C:nucleus"/>
    <property type="evidence" value="ECO:0000318"/>
    <property type="project" value="GO_Central"/>
</dbReference>
<dbReference type="GO" id="GO:0046983">
    <property type="term" value="F:protein dimerization activity"/>
    <property type="evidence" value="ECO:0007669"/>
    <property type="project" value="InterPro"/>
</dbReference>
<dbReference type="GO" id="GO:0000978">
    <property type="term" value="F:RNA polymerase II cis-regulatory region sequence-specific DNA binding"/>
    <property type="evidence" value="ECO:0000318"/>
    <property type="project" value="GO_Central"/>
</dbReference>
<dbReference type="GO" id="GO:0007219">
    <property type="term" value="P:Notch signaling pathway"/>
    <property type="evidence" value="ECO:0007669"/>
    <property type="project" value="UniProtKB-KW"/>
</dbReference>
<dbReference type="GO" id="GO:0050767">
    <property type="term" value="P:regulation of neurogenesis"/>
    <property type="evidence" value="ECO:0000318"/>
    <property type="project" value="GO_Central"/>
</dbReference>
<dbReference type="Gene3D" id="4.10.280.10">
    <property type="entry name" value="Helix-loop-helix DNA-binding domain"/>
    <property type="match status" value="1"/>
</dbReference>
<dbReference type="InterPro" id="IPR011598">
    <property type="entry name" value="bHLH_dom"/>
</dbReference>
<dbReference type="InterPro" id="IPR036638">
    <property type="entry name" value="HLH_DNA-bd_sf"/>
</dbReference>
<dbReference type="Pfam" id="PF00010">
    <property type="entry name" value="HLH"/>
    <property type="match status" value="1"/>
</dbReference>
<dbReference type="SMART" id="SM00353">
    <property type="entry name" value="HLH"/>
    <property type="match status" value="2"/>
</dbReference>
<dbReference type="SUPFAM" id="SSF47459">
    <property type="entry name" value="HLH, helix-loop-helix DNA-binding domain"/>
    <property type="match status" value="1"/>
</dbReference>
<dbReference type="PROSITE" id="PS50888">
    <property type="entry name" value="BHLH"/>
    <property type="match status" value="1"/>
</dbReference>
<proteinExistence type="evidence at protein level"/>
<name>HLH26_CAEEL</name>
<sequence>MSSSPTSSSSGSPSSHGHRSETEKQRRDDTNDLLNEFKKIVQKSESEKLSKEEVLFRIVKLLSGIQLHHESFSTSPGPIRSIKKIKSDREQVRRNKRVAAYRELRKFIALNNLSSSEEIDKMENLKVLEIIFEVIRGKSITCTVPCLPFPILPFLPVFPVYSPLVFNSYNQFSLYPPHMPTVQIPIVPSSSFEIDALEIEENEKDIDIVG</sequence>
<keyword id="KW-0217">Developmental protein</keyword>
<keyword id="KW-0238">DNA-binding</keyword>
<keyword id="KW-0914">Notch signaling pathway</keyword>
<keyword id="KW-0539">Nucleus</keyword>
<keyword id="KW-1185">Reference proteome</keyword>
<keyword id="KW-0678">Repressor</keyword>
<keyword id="KW-0804">Transcription</keyword>
<keyword id="KW-0805">Transcription regulation</keyword>
<reference key="1">
    <citation type="journal article" date="1998" name="Science">
        <title>Genome sequence of the nematode C. elegans: a platform for investigating biology.</title>
        <authorList>
            <consortium name="The C. elegans sequencing consortium"/>
        </authorList>
    </citation>
    <scope>NUCLEOTIDE SEQUENCE [LARGE SCALE GENOMIC DNA]</scope>
    <source>
        <strain>Bristol N2</strain>
    </source>
</reference>
<reference evidence="8" key="2">
    <citation type="journal article" date="2005" name="Dev. Cell">
        <title>The REF-1 family of bHLH transcription factors pattern C. elegans embryos through Notch-dependent and Notch-independent pathways.</title>
        <authorList>
            <person name="Neves A."/>
            <person name="Priess J.R."/>
        </authorList>
    </citation>
    <scope>FUNCTION</scope>
    <scope>DEVELOPMENTAL STAGE</scope>
</reference>
<reference evidence="8" key="3">
    <citation type="journal article" date="2007" name="Development">
        <title>Notch-GATA synergy promotes endoderm-specific expression of ref-1 in C. elegans.</title>
        <authorList>
            <person name="Neves A."/>
            <person name="English K."/>
            <person name="Priess J.R."/>
        </authorList>
    </citation>
    <scope>DEVELOPMENTAL STAGE</scope>
</reference>
<reference evidence="8" key="4">
    <citation type="journal article" date="2009" name="Cell">
        <title>A multiparameter network reveals extensive divergence between C. elegans bHLH transcription factors.</title>
        <authorList>
            <person name="Grove C.A."/>
            <person name="De Masi F."/>
            <person name="Barrasa M.I."/>
            <person name="Newburger D.E."/>
            <person name="Alkema M.J."/>
            <person name="Bulyk M.L."/>
            <person name="Walhout A.J.M."/>
        </authorList>
    </citation>
    <scope>FUNCTION</scope>
    <scope>DNA-BINDING</scope>
    <scope>SUBUNIT</scope>
    <scope>SUBCELLULAR LOCATION</scope>
</reference>
<reference key="5">
    <citation type="journal article" date="2022" name="PLoS Biol.">
        <title>The transcription factor HLH-26 controls probiotic-mediated protection against intestinal infection through up-regulation of the Wnt/BAR-1 pathway.</title>
        <authorList>
            <person name="Sang Y."/>
            <person name="Ren J."/>
            <person name="Aballay A."/>
        </authorList>
    </citation>
    <scope>FUNCTION</scope>
    <scope>TISSUE SPECIFICITY</scope>
    <scope>DISRUPTION PHENOTYPE</scope>
</reference>
<organism>
    <name type="scientific">Caenorhabditis elegans</name>
    <dbReference type="NCBI Taxonomy" id="6239"/>
    <lineage>
        <taxon>Eukaryota</taxon>
        <taxon>Metazoa</taxon>
        <taxon>Ecdysozoa</taxon>
        <taxon>Nematoda</taxon>
        <taxon>Chromadorea</taxon>
        <taxon>Rhabditida</taxon>
        <taxon>Rhabditina</taxon>
        <taxon>Rhabditomorpha</taxon>
        <taxon>Rhabditoidea</taxon>
        <taxon>Rhabditidae</taxon>
        <taxon>Peloderinae</taxon>
        <taxon>Caenorhabditis</taxon>
    </lineage>
</organism>
<comment type="function">
    <text evidence="3 5 6">As a homodimer binds DNA via the E-box sequence 5'-CACGTG-3' (PubMed:19632181). Represses lag-2 transcription during embryogenesis via Notch signaling, in an unc-37-dependent manner (PubMed:15935776). Also represses tbx-37 independent of Notch signaling (PubMed:15935776). In the intestine, plays a role in probiotic-mediated protection against infections by pathogens such as S.enterica (PubMed:35263319). This is most likely by positively regulating the expression of genes such as bar-1 upon exposure to probiotic bacteria such as the E.faecium (PubMed:35263319).</text>
</comment>
<comment type="subunit">
    <text evidence="5">Homodimer; binds to DNA as a homodimer.</text>
</comment>
<comment type="subcellular location">
    <subcellularLocation>
        <location evidence="1 9">Nucleus</location>
    </subcellularLocation>
</comment>
<comment type="tissue specificity">
    <text evidence="6">Expressed in intestinal cells (at protein level).</text>
</comment>
<comment type="developmental stage">
    <text evidence="3 4">Expressed in AB cell descendants in embryos.</text>
</comment>
<comment type="disruption phenotype">
    <text evidence="6">RNAi-mediated knockdown in the intestine decreases the E.faecium-mediated protection against S.enterica infection (PubMed:35263319). RNAi-mediated knockdown reduces the expression of genes including bar-1 following E.faecium infection (PubMed:35263319). RNAi-mediated knockdown in the germline or the nervous system does not affect E.faecium-mediated protection against S.enterica infection (PubMed:35263319).</text>
</comment>
<gene>
    <name evidence="10" type="primary">hlh-26</name>
    <name evidence="10" type="ORF">C17C3.8</name>
</gene>
<accession>Q18053</accession>
<protein>
    <recommendedName>
        <fullName evidence="7">Helix-loop-helix protein 26</fullName>
    </recommendedName>
</protein>
<feature type="chain" id="PRO_0000388708" description="Helix-loop-helix protein 26">
    <location>
        <begin position="1"/>
        <end position="210"/>
    </location>
</feature>
<feature type="domain" description="bHLH" evidence="1">
    <location>
        <begin position="14"/>
        <end position="65"/>
    </location>
</feature>
<feature type="region of interest" description="Disordered" evidence="2">
    <location>
        <begin position="1"/>
        <end position="33"/>
    </location>
</feature>
<feature type="compositionally biased region" description="Low complexity" evidence="2">
    <location>
        <begin position="1"/>
        <end position="15"/>
    </location>
</feature>
<feature type="compositionally biased region" description="Basic and acidic residues" evidence="2">
    <location>
        <begin position="18"/>
        <end position="33"/>
    </location>
</feature>